<proteinExistence type="inferred from homology"/>
<organism>
    <name type="scientific">Streptococcus uberis (strain ATCC BAA-854 / 0140J)</name>
    <dbReference type="NCBI Taxonomy" id="218495"/>
    <lineage>
        <taxon>Bacteria</taxon>
        <taxon>Bacillati</taxon>
        <taxon>Bacillota</taxon>
        <taxon>Bacilli</taxon>
        <taxon>Lactobacillales</taxon>
        <taxon>Streptococcaceae</taxon>
        <taxon>Streptococcus</taxon>
    </lineage>
</organism>
<dbReference type="EMBL" id="AM946015">
    <property type="protein sequence ID" value="CAR43930.1"/>
    <property type="molecule type" value="Genomic_DNA"/>
</dbReference>
<dbReference type="RefSeq" id="WP_015912145.1">
    <property type="nucleotide sequence ID" value="NC_012004.1"/>
</dbReference>
<dbReference type="SMR" id="B9DWE6"/>
<dbReference type="STRING" id="218495.SUB1860"/>
<dbReference type="KEGG" id="sub:SUB1860"/>
<dbReference type="eggNOG" id="COG1195">
    <property type="taxonomic scope" value="Bacteria"/>
</dbReference>
<dbReference type="HOGENOM" id="CLU_040267_0_1_9"/>
<dbReference type="OrthoDB" id="9803889at2"/>
<dbReference type="Proteomes" id="UP000000449">
    <property type="component" value="Chromosome"/>
</dbReference>
<dbReference type="GO" id="GO:0005737">
    <property type="term" value="C:cytoplasm"/>
    <property type="evidence" value="ECO:0007669"/>
    <property type="project" value="UniProtKB-SubCell"/>
</dbReference>
<dbReference type="GO" id="GO:0005524">
    <property type="term" value="F:ATP binding"/>
    <property type="evidence" value="ECO:0007669"/>
    <property type="project" value="UniProtKB-UniRule"/>
</dbReference>
<dbReference type="GO" id="GO:0003697">
    <property type="term" value="F:single-stranded DNA binding"/>
    <property type="evidence" value="ECO:0007669"/>
    <property type="project" value="UniProtKB-UniRule"/>
</dbReference>
<dbReference type="GO" id="GO:0006260">
    <property type="term" value="P:DNA replication"/>
    <property type="evidence" value="ECO:0007669"/>
    <property type="project" value="UniProtKB-UniRule"/>
</dbReference>
<dbReference type="GO" id="GO:0000731">
    <property type="term" value="P:DNA synthesis involved in DNA repair"/>
    <property type="evidence" value="ECO:0007669"/>
    <property type="project" value="TreeGrafter"/>
</dbReference>
<dbReference type="GO" id="GO:0006302">
    <property type="term" value="P:double-strand break repair"/>
    <property type="evidence" value="ECO:0007669"/>
    <property type="project" value="TreeGrafter"/>
</dbReference>
<dbReference type="GO" id="GO:0009432">
    <property type="term" value="P:SOS response"/>
    <property type="evidence" value="ECO:0007669"/>
    <property type="project" value="UniProtKB-UniRule"/>
</dbReference>
<dbReference type="CDD" id="cd03242">
    <property type="entry name" value="ABC_RecF"/>
    <property type="match status" value="1"/>
</dbReference>
<dbReference type="Gene3D" id="3.40.50.300">
    <property type="entry name" value="P-loop containing nucleotide triphosphate hydrolases"/>
    <property type="match status" value="1"/>
</dbReference>
<dbReference type="Gene3D" id="1.20.1050.90">
    <property type="entry name" value="RecF/RecN/SMC, N-terminal domain"/>
    <property type="match status" value="1"/>
</dbReference>
<dbReference type="HAMAP" id="MF_00365">
    <property type="entry name" value="RecF"/>
    <property type="match status" value="1"/>
</dbReference>
<dbReference type="InterPro" id="IPR001238">
    <property type="entry name" value="DNA-binding_RecF"/>
</dbReference>
<dbReference type="InterPro" id="IPR018078">
    <property type="entry name" value="DNA-binding_RecF_CS"/>
</dbReference>
<dbReference type="InterPro" id="IPR027417">
    <property type="entry name" value="P-loop_NTPase"/>
</dbReference>
<dbReference type="InterPro" id="IPR003395">
    <property type="entry name" value="RecF/RecN/SMC_N"/>
</dbReference>
<dbReference type="InterPro" id="IPR042174">
    <property type="entry name" value="RecF_2"/>
</dbReference>
<dbReference type="NCBIfam" id="TIGR00611">
    <property type="entry name" value="recf"/>
    <property type="match status" value="1"/>
</dbReference>
<dbReference type="PANTHER" id="PTHR32182">
    <property type="entry name" value="DNA REPLICATION AND REPAIR PROTEIN RECF"/>
    <property type="match status" value="1"/>
</dbReference>
<dbReference type="PANTHER" id="PTHR32182:SF0">
    <property type="entry name" value="DNA REPLICATION AND REPAIR PROTEIN RECF"/>
    <property type="match status" value="1"/>
</dbReference>
<dbReference type="Pfam" id="PF02463">
    <property type="entry name" value="SMC_N"/>
    <property type="match status" value="1"/>
</dbReference>
<dbReference type="SUPFAM" id="SSF52540">
    <property type="entry name" value="P-loop containing nucleoside triphosphate hydrolases"/>
    <property type="match status" value="1"/>
</dbReference>
<dbReference type="PROSITE" id="PS00617">
    <property type="entry name" value="RECF_1"/>
    <property type="match status" value="1"/>
</dbReference>
<dbReference type="PROSITE" id="PS00618">
    <property type="entry name" value="RECF_2"/>
    <property type="match status" value="1"/>
</dbReference>
<comment type="function">
    <text evidence="1">The RecF protein is involved in DNA metabolism; it is required for DNA replication and normal SOS inducibility. RecF binds preferentially to single-stranded, linear DNA. It also seems to bind ATP.</text>
</comment>
<comment type="subcellular location">
    <subcellularLocation>
        <location evidence="1">Cytoplasm</location>
    </subcellularLocation>
</comment>
<comment type="similarity">
    <text evidence="1">Belongs to the RecF family.</text>
</comment>
<protein>
    <recommendedName>
        <fullName evidence="1">DNA replication and repair protein RecF</fullName>
    </recommendedName>
</protein>
<keyword id="KW-0067">ATP-binding</keyword>
<keyword id="KW-0963">Cytoplasm</keyword>
<keyword id="KW-0227">DNA damage</keyword>
<keyword id="KW-0234">DNA repair</keyword>
<keyword id="KW-0235">DNA replication</keyword>
<keyword id="KW-0238">DNA-binding</keyword>
<keyword id="KW-0547">Nucleotide-binding</keyword>
<keyword id="KW-1185">Reference proteome</keyword>
<keyword id="KW-0742">SOS response</keyword>
<feature type="chain" id="PRO_1000133703" description="DNA replication and repair protein RecF">
    <location>
        <begin position="1"/>
        <end position="364"/>
    </location>
</feature>
<feature type="binding site" evidence="1">
    <location>
        <begin position="30"/>
        <end position="37"/>
    </location>
    <ligand>
        <name>ATP</name>
        <dbReference type="ChEBI" id="CHEBI:30616"/>
    </ligand>
</feature>
<sequence>MWIKELQLRNFRNYGTVDTEFSPGLNVFIGNNAQGKTNFLEAIYFLALTRSHRTRTDKELIQFSKNNLQLIGKLNRISGALSLELQLSDKGRITKINALKQARLSDYIGTMMVVLFAPEDLQLIKGAPSLRRKFIDIDLGQIKPIYLSDLSNYNYVLKQRNTYLKTISTINSDFLSVLDEQLADYGSKVIKHRIDFIGELTREANKHHEAISNGLESLIITYESSVTQQDHQTIKEAFLLNLQKNRQRDIFKKNTSIGPHRDDIHFFINDMNANFASQGQHRSLILSLKMAEVSLMKEMTGDNPILLLDDVMSELDNTRQIKLLETVINENVQTFITTTSLDHLLHLPDKIKTFHVNQGTLKAD</sequence>
<name>RECF_STRU0</name>
<reference key="1">
    <citation type="journal article" date="2009" name="BMC Genomics">
        <title>Evidence for niche adaptation in the genome of the bovine pathogen Streptococcus uberis.</title>
        <authorList>
            <person name="Ward P.N."/>
            <person name="Holden M.T.G."/>
            <person name="Leigh J.A."/>
            <person name="Lennard N."/>
            <person name="Bignell A."/>
            <person name="Barron A."/>
            <person name="Clark L."/>
            <person name="Quail M.A."/>
            <person name="Woodward J."/>
            <person name="Barrell B.G."/>
            <person name="Egan S.A."/>
            <person name="Field T.R."/>
            <person name="Maskell D."/>
            <person name="Kehoe M."/>
            <person name="Dowson C.G."/>
            <person name="Chanter N."/>
            <person name="Whatmore A.M."/>
            <person name="Bentley S.D."/>
            <person name="Parkhill J."/>
        </authorList>
    </citation>
    <scope>NUCLEOTIDE SEQUENCE [LARGE SCALE GENOMIC DNA]</scope>
    <source>
        <strain>ATCC BAA-854 / 0140J</strain>
    </source>
</reference>
<evidence type="ECO:0000255" key="1">
    <source>
        <dbReference type="HAMAP-Rule" id="MF_00365"/>
    </source>
</evidence>
<accession>B9DWE6</accession>
<gene>
    <name evidence="1" type="primary">recF</name>
    <name type="ordered locus">SUB1860</name>
</gene>